<proteinExistence type="inferred from homology"/>
<comment type="function">
    <text evidence="1">Catalyzes the isomerization between 2-isopropylmalate and 3-isopropylmalate, via the formation of 2-isopropylmaleate.</text>
</comment>
<comment type="catalytic activity">
    <reaction evidence="1">
        <text>(2R,3S)-3-isopropylmalate = (2S)-2-isopropylmalate</text>
        <dbReference type="Rhea" id="RHEA:32287"/>
        <dbReference type="ChEBI" id="CHEBI:1178"/>
        <dbReference type="ChEBI" id="CHEBI:35121"/>
        <dbReference type="EC" id="4.2.1.33"/>
    </reaction>
</comment>
<comment type="cofactor">
    <cofactor evidence="1">
        <name>[4Fe-4S] cluster</name>
        <dbReference type="ChEBI" id="CHEBI:49883"/>
    </cofactor>
    <text evidence="1">Binds 1 [4Fe-4S] cluster per subunit.</text>
</comment>
<comment type="pathway">
    <text evidence="1">Amino-acid biosynthesis; L-leucine biosynthesis; L-leucine from 3-methyl-2-oxobutanoate: step 2/4.</text>
</comment>
<comment type="subunit">
    <text evidence="1">Heterodimer of LeuC and LeuD.</text>
</comment>
<comment type="similarity">
    <text evidence="1">Belongs to the aconitase/IPM isomerase family. LeuC type 1 subfamily.</text>
</comment>
<dbReference type="EC" id="4.2.1.33" evidence="1"/>
<dbReference type="EMBL" id="AE007869">
    <property type="protein sequence ID" value="AAK88428.2"/>
    <property type="molecule type" value="Genomic_DNA"/>
</dbReference>
<dbReference type="PIR" id="AD2909">
    <property type="entry name" value="AD2909"/>
</dbReference>
<dbReference type="PIR" id="C97684">
    <property type="entry name" value="C97684"/>
</dbReference>
<dbReference type="RefSeq" id="NP_355643.2">
    <property type="nucleotide sequence ID" value="NC_003062.2"/>
</dbReference>
<dbReference type="RefSeq" id="WP_010972507.1">
    <property type="nucleotide sequence ID" value="NC_003062.2"/>
</dbReference>
<dbReference type="SMR" id="Q8UBY9"/>
<dbReference type="STRING" id="176299.Atu2709"/>
<dbReference type="EnsemblBacteria" id="AAK88428">
    <property type="protein sequence ID" value="AAK88428"/>
    <property type="gene ID" value="Atu2709"/>
</dbReference>
<dbReference type="GeneID" id="1134747"/>
<dbReference type="KEGG" id="atu:Atu2709"/>
<dbReference type="PATRIC" id="fig|176299.10.peg.2718"/>
<dbReference type="eggNOG" id="COG0065">
    <property type="taxonomic scope" value="Bacteria"/>
</dbReference>
<dbReference type="HOGENOM" id="CLU_006714_3_4_5"/>
<dbReference type="OrthoDB" id="9802769at2"/>
<dbReference type="PhylomeDB" id="Q8UBY9"/>
<dbReference type="BioCyc" id="AGRO:ATU2709-MONOMER"/>
<dbReference type="UniPathway" id="UPA00048">
    <property type="reaction ID" value="UER00071"/>
</dbReference>
<dbReference type="Proteomes" id="UP000000813">
    <property type="component" value="Chromosome circular"/>
</dbReference>
<dbReference type="GO" id="GO:0003861">
    <property type="term" value="F:3-isopropylmalate dehydratase activity"/>
    <property type="evidence" value="ECO:0007669"/>
    <property type="project" value="UniProtKB-UniRule"/>
</dbReference>
<dbReference type="GO" id="GO:0051539">
    <property type="term" value="F:4 iron, 4 sulfur cluster binding"/>
    <property type="evidence" value="ECO:0007669"/>
    <property type="project" value="UniProtKB-KW"/>
</dbReference>
<dbReference type="GO" id="GO:0046872">
    <property type="term" value="F:metal ion binding"/>
    <property type="evidence" value="ECO:0007669"/>
    <property type="project" value="UniProtKB-KW"/>
</dbReference>
<dbReference type="GO" id="GO:0009098">
    <property type="term" value="P:L-leucine biosynthetic process"/>
    <property type="evidence" value="ECO:0007669"/>
    <property type="project" value="UniProtKB-UniRule"/>
</dbReference>
<dbReference type="CDD" id="cd01583">
    <property type="entry name" value="IPMI"/>
    <property type="match status" value="1"/>
</dbReference>
<dbReference type="FunFam" id="3.30.499.10:FF:000006">
    <property type="entry name" value="3-isopropylmalate dehydratase large subunit"/>
    <property type="match status" value="1"/>
</dbReference>
<dbReference type="FunFam" id="3.30.499.10:FF:000007">
    <property type="entry name" value="3-isopropylmalate dehydratase large subunit"/>
    <property type="match status" value="1"/>
</dbReference>
<dbReference type="Gene3D" id="3.30.499.10">
    <property type="entry name" value="Aconitase, domain 3"/>
    <property type="match status" value="2"/>
</dbReference>
<dbReference type="HAMAP" id="MF_01026">
    <property type="entry name" value="LeuC_type1"/>
    <property type="match status" value="1"/>
</dbReference>
<dbReference type="InterPro" id="IPR004430">
    <property type="entry name" value="3-IsopropMal_deHydase_lsu"/>
</dbReference>
<dbReference type="InterPro" id="IPR015931">
    <property type="entry name" value="Acnase/IPM_dHydase_lsu_aba_1/3"/>
</dbReference>
<dbReference type="InterPro" id="IPR001030">
    <property type="entry name" value="Acoase/IPM_deHydtase_lsu_aba"/>
</dbReference>
<dbReference type="InterPro" id="IPR018136">
    <property type="entry name" value="Aconitase_4Fe-4S_BS"/>
</dbReference>
<dbReference type="InterPro" id="IPR036008">
    <property type="entry name" value="Aconitase_4Fe-4S_dom"/>
</dbReference>
<dbReference type="InterPro" id="IPR050067">
    <property type="entry name" value="IPM_dehydratase_rel_enz"/>
</dbReference>
<dbReference type="InterPro" id="IPR033941">
    <property type="entry name" value="IPMI_cat"/>
</dbReference>
<dbReference type="NCBIfam" id="TIGR00170">
    <property type="entry name" value="leuC"/>
    <property type="match status" value="1"/>
</dbReference>
<dbReference type="NCBIfam" id="NF004016">
    <property type="entry name" value="PRK05478.1"/>
    <property type="match status" value="1"/>
</dbReference>
<dbReference type="NCBIfam" id="NF009116">
    <property type="entry name" value="PRK12466.1"/>
    <property type="match status" value="1"/>
</dbReference>
<dbReference type="PANTHER" id="PTHR43822:SF9">
    <property type="entry name" value="3-ISOPROPYLMALATE DEHYDRATASE"/>
    <property type="match status" value="1"/>
</dbReference>
<dbReference type="PANTHER" id="PTHR43822">
    <property type="entry name" value="HOMOACONITASE, MITOCHONDRIAL-RELATED"/>
    <property type="match status" value="1"/>
</dbReference>
<dbReference type="Pfam" id="PF00330">
    <property type="entry name" value="Aconitase"/>
    <property type="match status" value="1"/>
</dbReference>
<dbReference type="PRINTS" id="PR00415">
    <property type="entry name" value="ACONITASE"/>
</dbReference>
<dbReference type="SUPFAM" id="SSF53732">
    <property type="entry name" value="Aconitase iron-sulfur domain"/>
    <property type="match status" value="1"/>
</dbReference>
<dbReference type="PROSITE" id="PS00450">
    <property type="entry name" value="ACONITASE_1"/>
    <property type="match status" value="1"/>
</dbReference>
<dbReference type="PROSITE" id="PS01244">
    <property type="entry name" value="ACONITASE_2"/>
    <property type="match status" value="1"/>
</dbReference>
<gene>
    <name evidence="1" type="primary">leuC</name>
    <name type="ordered locus">Atu2709</name>
    <name type="ORF">AGR_C_4910</name>
</gene>
<keyword id="KW-0004">4Fe-4S</keyword>
<keyword id="KW-0028">Amino-acid biosynthesis</keyword>
<keyword id="KW-0100">Branched-chain amino acid biosynthesis</keyword>
<keyword id="KW-0408">Iron</keyword>
<keyword id="KW-0411">Iron-sulfur</keyword>
<keyword id="KW-0432">Leucine biosynthesis</keyword>
<keyword id="KW-0456">Lyase</keyword>
<keyword id="KW-0479">Metal-binding</keyword>
<keyword id="KW-1185">Reference proteome</keyword>
<sequence length="469" mass="51049">MSAPRTLYDKIWDDHVVNRDPDGTCLLYIDRHLVHEVTSPQAFEGLRIAGRPVHSPTRTLAVVDHNVPTTADRLEGIKNEESRIQVEALAQNAKEFGVEYYSERDKRQGIVHIVGPEQGFTLPGMTIVCGDSHTSTHGAFGALAHGIGTSEVEHVLATQTLIQKKAKNMLVRVDGKLPESVTAKDIILAIIGEIGTAGGTGHVIEFAGEAIRSLSMEGRMTVCNMTIEGGARAGLIAPDETTFDYIKDKPRAPKGETLEQAIAYWKTLKSDEGAHYDKVVILDAANLPPIVSWGSSPEDVTSVEGIVPNPDDIEEENKRTSKWRALDYMGLKPGTRITDIAIDRVFIGSCTNGRIEDLRAAAKIVDGRKVASTVSAMIVPGSGLVKEQAEKEGLDKIFLDAGFEWREPGCSMCLAMNDDRLKPGERCASTSNRNFEGRQGYKSRTHLVSPAMAAAAAIAGHFVDVREWQ</sequence>
<reference key="1">
    <citation type="journal article" date="2001" name="Science">
        <title>The genome of the natural genetic engineer Agrobacterium tumefaciens C58.</title>
        <authorList>
            <person name="Wood D.W."/>
            <person name="Setubal J.C."/>
            <person name="Kaul R."/>
            <person name="Monks D.E."/>
            <person name="Kitajima J.P."/>
            <person name="Okura V.K."/>
            <person name="Zhou Y."/>
            <person name="Chen L."/>
            <person name="Wood G.E."/>
            <person name="Almeida N.F. Jr."/>
            <person name="Woo L."/>
            <person name="Chen Y."/>
            <person name="Paulsen I.T."/>
            <person name="Eisen J.A."/>
            <person name="Karp P.D."/>
            <person name="Bovee D. Sr."/>
            <person name="Chapman P."/>
            <person name="Clendenning J."/>
            <person name="Deatherage G."/>
            <person name="Gillet W."/>
            <person name="Grant C."/>
            <person name="Kutyavin T."/>
            <person name="Levy R."/>
            <person name="Li M.-J."/>
            <person name="McClelland E."/>
            <person name="Palmieri A."/>
            <person name="Raymond C."/>
            <person name="Rouse G."/>
            <person name="Saenphimmachak C."/>
            <person name="Wu Z."/>
            <person name="Romero P."/>
            <person name="Gordon D."/>
            <person name="Zhang S."/>
            <person name="Yoo H."/>
            <person name="Tao Y."/>
            <person name="Biddle P."/>
            <person name="Jung M."/>
            <person name="Krespan W."/>
            <person name="Perry M."/>
            <person name="Gordon-Kamm B."/>
            <person name="Liao L."/>
            <person name="Kim S."/>
            <person name="Hendrick C."/>
            <person name="Zhao Z.-Y."/>
            <person name="Dolan M."/>
            <person name="Chumley F."/>
            <person name="Tingey S.V."/>
            <person name="Tomb J.-F."/>
            <person name="Gordon M.P."/>
            <person name="Olson M.V."/>
            <person name="Nester E.W."/>
        </authorList>
    </citation>
    <scope>NUCLEOTIDE SEQUENCE [LARGE SCALE GENOMIC DNA]</scope>
    <source>
        <strain>C58 / ATCC 33970</strain>
    </source>
</reference>
<reference key="2">
    <citation type="journal article" date="2001" name="Science">
        <title>Genome sequence of the plant pathogen and biotechnology agent Agrobacterium tumefaciens C58.</title>
        <authorList>
            <person name="Goodner B."/>
            <person name="Hinkle G."/>
            <person name="Gattung S."/>
            <person name="Miller N."/>
            <person name="Blanchard M."/>
            <person name="Qurollo B."/>
            <person name="Goldman B.S."/>
            <person name="Cao Y."/>
            <person name="Askenazi M."/>
            <person name="Halling C."/>
            <person name="Mullin L."/>
            <person name="Houmiel K."/>
            <person name="Gordon J."/>
            <person name="Vaudin M."/>
            <person name="Iartchouk O."/>
            <person name="Epp A."/>
            <person name="Liu F."/>
            <person name="Wollam C."/>
            <person name="Allinger M."/>
            <person name="Doughty D."/>
            <person name="Scott C."/>
            <person name="Lappas C."/>
            <person name="Markelz B."/>
            <person name="Flanagan C."/>
            <person name="Crowell C."/>
            <person name="Gurson J."/>
            <person name="Lomo C."/>
            <person name="Sear C."/>
            <person name="Strub G."/>
            <person name="Cielo C."/>
            <person name="Slater S."/>
        </authorList>
    </citation>
    <scope>NUCLEOTIDE SEQUENCE [LARGE SCALE GENOMIC DNA]</scope>
    <source>
        <strain>C58 / ATCC 33970</strain>
    </source>
</reference>
<accession>Q8UBY9</accession>
<protein>
    <recommendedName>
        <fullName evidence="1">3-isopropylmalate dehydratase large subunit</fullName>
        <ecNumber evidence="1">4.2.1.33</ecNumber>
    </recommendedName>
    <alternativeName>
        <fullName evidence="1">Alpha-IPM isomerase</fullName>
        <shortName evidence="1">IPMI</shortName>
    </alternativeName>
    <alternativeName>
        <fullName evidence="1">Isopropylmalate isomerase</fullName>
    </alternativeName>
</protein>
<organism>
    <name type="scientific">Agrobacterium fabrum (strain C58 / ATCC 33970)</name>
    <name type="common">Agrobacterium tumefaciens (strain C58)</name>
    <dbReference type="NCBI Taxonomy" id="176299"/>
    <lineage>
        <taxon>Bacteria</taxon>
        <taxon>Pseudomonadati</taxon>
        <taxon>Pseudomonadota</taxon>
        <taxon>Alphaproteobacteria</taxon>
        <taxon>Hyphomicrobiales</taxon>
        <taxon>Rhizobiaceae</taxon>
        <taxon>Rhizobium/Agrobacterium group</taxon>
        <taxon>Agrobacterium</taxon>
        <taxon>Agrobacterium tumefaciens complex</taxon>
    </lineage>
</organism>
<evidence type="ECO:0000255" key="1">
    <source>
        <dbReference type="HAMAP-Rule" id="MF_01026"/>
    </source>
</evidence>
<feature type="chain" id="PRO_0000076689" description="3-isopropylmalate dehydratase large subunit">
    <location>
        <begin position="1"/>
        <end position="469"/>
    </location>
</feature>
<feature type="binding site" evidence="1">
    <location>
        <position position="350"/>
    </location>
    <ligand>
        <name>[4Fe-4S] cluster</name>
        <dbReference type="ChEBI" id="CHEBI:49883"/>
    </ligand>
</feature>
<feature type="binding site" evidence="1">
    <location>
        <position position="410"/>
    </location>
    <ligand>
        <name>[4Fe-4S] cluster</name>
        <dbReference type="ChEBI" id="CHEBI:49883"/>
    </ligand>
</feature>
<feature type="binding site" evidence="1">
    <location>
        <position position="413"/>
    </location>
    <ligand>
        <name>[4Fe-4S] cluster</name>
        <dbReference type="ChEBI" id="CHEBI:49883"/>
    </ligand>
</feature>
<name>LEUC_AGRFC</name>